<geneLocation type="chloroplast"/>
<dbReference type="EC" id="7.1.1.-" evidence="1"/>
<dbReference type="EMBL" id="AJ627251">
    <property type="protein sequence ID" value="CAF28648.1"/>
    <property type="molecule type" value="Genomic_DNA"/>
</dbReference>
<dbReference type="RefSeq" id="YP_053208.1">
    <property type="nucleotide sequence ID" value="NC_006050.1"/>
</dbReference>
<dbReference type="SMR" id="Q6EVZ8"/>
<dbReference type="GeneID" id="2896131"/>
<dbReference type="GO" id="GO:0009535">
    <property type="term" value="C:chloroplast thylakoid membrane"/>
    <property type="evidence" value="ECO:0007669"/>
    <property type="project" value="UniProtKB-SubCell"/>
</dbReference>
<dbReference type="GO" id="GO:0030964">
    <property type="term" value="C:NADH dehydrogenase complex"/>
    <property type="evidence" value="ECO:0007669"/>
    <property type="project" value="TreeGrafter"/>
</dbReference>
<dbReference type="GO" id="GO:0016655">
    <property type="term" value="F:oxidoreductase activity, acting on NAD(P)H, quinone or similar compound as acceptor"/>
    <property type="evidence" value="ECO:0007669"/>
    <property type="project" value="UniProtKB-UniRule"/>
</dbReference>
<dbReference type="GO" id="GO:0048038">
    <property type="term" value="F:quinone binding"/>
    <property type="evidence" value="ECO:0007669"/>
    <property type="project" value="UniProtKB-KW"/>
</dbReference>
<dbReference type="GO" id="GO:0042773">
    <property type="term" value="P:ATP synthesis coupled electron transport"/>
    <property type="evidence" value="ECO:0007669"/>
    <property type="project" value="InterPro"/>
</dbReference>
<dbReference type="GO" id="GO:0019684">
    <property type="term" value="P:photosynthesis, light reaction"/>
    <property type="evidence" value="ECO:0007669"/>
    <property type="project" value="UniProtKB-UniRule"/>
</dbReference>
<dbReference type="FunFam" id="1.10.287.3510:FF:000001">
    <property type="entry name" value="NADH-quinone oxidoreductase subunit K"/>
    <property type="match status" value="1"/>
</dbReference>
<dbReference type="Gene3D" id="1.10.287.3510">
    <property type="match status" value="1"/>
</dbReference>
<dbReference type="HAMAP" id="MF_01456">
    <property type="entry name" value="NDH1_NuoK"/>
    <property type="match status" value="1"/>
</dbReference>
<dbReference type="InterPro" id="IPR001133">
    <property type="entry name" value="NADH_UbQ_OxRdtase_chain4L/K"/>
</dbReference>
<dbReference type="InterPro" id="IPR039428">
    <property type="entry name" value="NUOK/Mnh_C1-like"/>
</dbReference>
<dbReference type="NCBIfam" id="NF004320">
    <property type="entry name" value="PRK05715.1-2"/>
    <property type="match status" value="1"/>
</dbReference>
<dbReference type="NCBIfam" id="NF004322">
    <property type="entry name" value="PRK05715.1-4"/>
    <property type="match status" value="1"/>
</dbReference>
<dbReference type="PANTHER" id="PTHR11434:SF16">
    <property type="entry name" value="NADH-UBIQUINONE OXIDOREDUCTASE CHAIN 4L"/>
    <property type="match status" value="1"/>
</dbReference>
<dbReference type="PANTHER" id="PTHR11434">
    <property type="entry name" value="NADH-UBIQUINONE OXIDOREDUCTASE SUBUNIT ND4L"/>
    <property type="match status" value="1"/>
</dbReference>
<dbReference type="Pfam" id="PF00420">
    <property type="entry name" value="Oxidored_q2"/>
    <property type="match status" value="1"/>
</dbReference>
<name>NU4LC_NYMAL</name>
<accession>Q6EVZ8</accession>
<gene>
    <name evidence="1" type="primary">ndhE</name>
</gene>
<comment type="function">
    <text evidence="1">NDH shuttles electrons from NAD(P)H:plastoquinone, via FMN and iron-sulfur (Fe-S) centers, to quinones in the photosynthetic chain and possibly in a chloroplast respiratory chain. The immediate electron acceptor for the enzyme in this species is believed to be plastoquinone. Couples the redox reaction to proton translocation, and thus conserves the redox energy in a proton gradient.</text>
</comment>
<comment type="catalytic activity">
    <reaction evidence="1">
        <text>a plastoquinone + NADH + (n+1) H(+)(in) = a plastoquinol + NAD(+) + n H(+)(out)</text>
        <dbReference type="Rhea" id="RHEA:42608"/>
        <dbReference type="Rhea" id="RHEA-COMP:9561"/>
        <dbReference type="Rhea" id="RHEA-COMP:9562"/>
        <dbReference type="ChEBI" id="CHEBI:15378"/>
        <dbReference type="ChEBI" id="CHEBI:17757"/>
        <dbReference type="ChEBI" id="CHEBI:57540"/>
        <dbReference type="ChEBI" id="CHEBI:57945"/>
        <dbReference type="ChEBI" id="CHEBI:62192"/>
    </reaction>
</comment>
<comment type="catalytic activity">
    <reaction evidence="1">
        <text>a plastoquinone + NADPH + (n+1) H(+)(in) = a plastoquinol + NADP(+) + n H(+)(out)</text>
        <dbReference type="Rhea" id="RHEA:42612"/>
        <dbReference type="Rhea" id="RHEA-COMP:9561"/>
        <dbReference type="Rhea" id="RHEA-COMP:9562"/>
        <dbReference type="ChEBI" id="CHEBI:15378"/>
        <dbReference type="ChEBI" id="CHEBI:17757"/>
        <dbReference type="ChEBI" id="CHEBI:57783"/>
        <dbReference type="ChEBI" id="CHEBI:58349"/>
        <dbReference type="ChEBI" id="CHEBI:62192"/>
    </reaction>
</comment>
<comment type="subunit">
    <text evidence="1">NDH is composed of at least 16 different subunits, 5 of which are encoded in the nucleus.</text>
</comment>
<comment type="subcellular location">
    <subcellularLocation>
        <location evidence="1">Plastid</location>
        <location evidence="1">Chloroplast thylakoid membrane</location>
        <topology evidence="1">Multi-pass membrane protein</topology>
    </subcellularLocation>
</comment>
<comment type="similarity">
    <text evidence="1">Belongs to the complex I subunit 4L family.</text>
</comment>
<evidence type="ECO:0000255" key="1">
    <source>
        <dbReference type="HAMAP-Rule" id="MF_01456"/>
    </source>
</evidence>
<proteinExistence type="inferred from homology"/>
<reference key="1">
    <citation type="journal article" date="2004" name="Mol. Biol. Evol.">
        <title>The chloroplast genome of Nymphaea alba: whole-genome analyses and the problem of identifying the most basal angiosperm.</title>
        <authorList>
            <person name="Goremykin V.V."/>
            <person name="Hirsch-Ernst K.I."/>
            <person name="Woelfl S."/>
            <person name="Hellwig F.H."/>
        </authorList>
    </citation>
    <scope>NUCLEOTIDE SEQUENCE [LARGE SCALE GENOMIC DNA]</scope>
</reference>
<protein>
    <recommendedName>
        <fullName evidence="1">NAD(P)H-quinone oxidoreductase subunit 4L, chloroplastic</fullName>
        <ecNumber evidence="1">7.1.1.-</ecNumber>
    </recommendedName>
    <alternativeName>
        <fullName evidence="1">NAD(P)H dehydrogenase subunit 4L</fullName>
    </alternativeName>
    <alternativeName>
        <fullName evidence="1">NADH-plastoquinone oxidoreductase subunit 4L</fullName>
    </alternativeName>
</protein>
<organism>
    <name type="scientific">Nymphaea alba</name>
    <name type="common">White water-lily</name>
    <name type="synonym">Castalia alba</name>
    <dbReference type="NCBI Taxonomy" id="34301"/>
    <lineage>
        <taxon>Eukaryota</taxon>
        <taxon>Viridiplantae</taxon>
        <taxon>Streptophyta</taxon>
        <taxon>Embryophyta</taxon>
        <taxon>Tracheophyta</taxon>
        <taxon>Spermatophyta</taxon>
        <taxon>Magnoliopsida</taxon>
        <taxon>Nymphaeales</taxon>
        <taxon>Nymphaeaceae</taxon>
        <taxon>Nymphaea</taxon>
    </lineage>
</organism>
<feature type="chain" id="PRO_0000360351" description="NAD(P)H-quinone oxidoreductase subunit 4L, chloroplastic">
    <location>
        <begin position="1"/>
        <end position="101"/>
    </location>
</feature>
<feature type="transmembrane region" description="Helical" evidence="1">
    <location>
        <begin position="2"/>
        <end position="22"/>
    </location>
</feature>
<feature type="transmembrane region" description="Helical" evidence="1">
    <location>
        <begin position="32"/>
        <end position="52"/>
    </location>
</feature>
<feature type="transmembrane region" description="Helical" evidence="1">
    <location>
        <begin position="61"/>
        <end position="81"/>
    </location>
</feature>
<sequence length="101" mass="11209">MMLEHVLVLSAYLFSIGIYGLITSRNMVRALMCLELILNAVNMNLVTFSDLFDSRQLKGDIFSIFVIAIAAAEAAIGPAIVSSIYRNRKSTRINQSNLLNK</sequence>
<keyword id="KW-0150">Chloroplast</keyword>
<keyword id="KW-0472">Membrane</keyword>
<keyword id="KW-0520">NAD</keyword>
<keyword id="KW-0521">NADP</keyword>
<keyword id="KW-0934">Plastid</keyword>
<keyword id="KW-0618">Plastoquinone</keyword>
<keyword id="KW-0874">Quinone</keyword>
<keyword id="KW-0793">Thylakoid</keyword>
<keyword id="KW-1278">Translocase</keyword>
<keyword id="KW-0812">Transmembrane</keyword>
<keyword id="KW-1133">Transmembrane helix</keyword>
<keyword id="KW-0813">Transport</keyword>